<organism>
    <name type="scientific">Eremothecium gossypii (strain ATCC 10895 / CBS 109.51 / FGSC 9923 / NRRL Y-1056)</name>
    <name type="common">Yeast</name>
    <name type="synonym">Ashbya gossypii</name>
    <dbReference type="NCBI Taxonomy" id="284811"/>
    <lineage>
        <taxon>Eukaryota</taxon>
        <taxon>Fungi</taxon>
        <taxon>Dikarya</taxon>
        <taxon>Ascomycota</taxon>
        <taxon>Saccharomycotina</taxon>
        <taxon>Saccharomycetes</taxon>
        <taxon>Saccharomycetales</taxon>
        <taxon>Saccharomycetaceae</taxon>
        <taxon>Eremothecium</taxon>
    </lineage>
</organism>
<dbReference type="EC" id="3.6.4.10"/>
<dbReference type="EMBL" id="AE016815">
    <property type="protein sequence ID" value="AAS50597.1"/>
    <property type="molecule type" value="Genomic_DNA"/>
</dbReference>
<dbReference type="RefSeq" id="NP_982773.1">
    <property type="nucleotide sequence ID" value="NM_208126.2"/>
</dbReference>
<dbReference type="SMR" id="Q75E44"/>
<dbReference type="FunCoup" id="Q75E44">
    <property type="interactions" value="1939"/>
</dbReference>
<dbReference type="STRING" id="284811.Q75E44"/>
<dbReference type="EnsemblFungi" id="AAS50597">
    <property type="protein sequence ID" value="AAS50597"/>
    <property type="gene ID" value="AGOS_ABL174C"/>
</dbReference>
<dbReference type="GeneID" id="4618853"/>
<dbReference type="KEGG" id="ago:AGOS_ABL174C"/>
<dbReference type="eggNOG" id="KOG0101">
    <property type="taxonomic scope" value="Eukaryota"/>
</dbReference>
<dbReference type="HOGENOM" id="CLU_005965_2_1_1"/>
<dbReference type="InParanoid" id="Q75E44"/>
<dbReference type="OMA" id="NIPPMQA"/>
<dbReference type="OrthoDB" id="2401965at2759"/>
<dbReference type="Proteomes" id="UP000000591">
    <property type="component" value="Chromosome II"/>
</dbReference>
<dbReference type="GO" id="GO:0005737">
    <property type="term" value="C:cytoplasm"/>
    <property type="evidence" value="ECO:0000318"/>
    <property type="project" value="GO_Central"/>
</dbReference>
<dbReference type="GO" id="GO:0005829">
    <property type="term" value="C:cytosol"/>
    <property type="evidence" value="ECO:0000318"/>
    <property type="project" value="GO_Central"/>
</dbReference>
<dbReference type="GO" id="GO:0005634">
    <property type="term" value="C:nucleus"/>
    <property type="evidence" value="ECO:0000318"/>
    <property type="project" value="GO_Central"/>
</dbReference>
<dbReference type="GO" id="GO:0005886">
    <property type="term" value="C:plasma membrane"/>
    <property type="evidence" value="ECO:0000318"/>
    <property type="project" value="GO_Central"/>
</dbReference>
<dbReference type="GO" id="GO:0005524">
    <property type="term" value="F:ATP binding"/>
    <property type="evidence" value="ECO:0007669"/>
    <property type="project" value="UniProtKB-KW"/>
</dbReference>
<dbReference type="GO" id="GO:0016887">
    <property type="term" value="F:ATP hydrolysis activity"/>
    <property type="evidence" value="ECO:0000318"/>
    <property type="project" value="GO_Central"/>
</dbReference>
<dbReference type="GO" id="GO:0140662">
    <property type="term" value="F:ATP-dependent protein folding chaperone"/>
    <property type="evidence" value="ECO:0007669"/>
    <property type="project" value="InterPro"/>
</dbReference>
<dbReference type="GO" id="GO:0031072">
    <property type="term" value="F:heat shock protein binding"/>
    <property type="evidence" value="ECO:0000318"/>
    <property type="project" value="GO_Central"/>
</dbReference>
<dbReference type="GO" id="GO:0044183">
    <property type="term" value="F:protein folding chaperone"/>
    <property type="evidence" value="ECO:0000318"/>
    <property type="project" value="GO_Central"/>
</dbReference>
<dbReference type="GO" id="GO:0051085">
    <property type="term" value="P:chaperone cofactor-dependent protein refolding"/>
    <property type="evidence" value="ECO:0000318"/>
    <property type="project" value="GO_Central"/>
</dbReference>
<dbReference type="GO" id="GO:0042026">
    <property type="term" value="P:protein refolding"/>
    <property type="evidence" value="ECO:0000318"/>
    <property type="project" value="GO_Central"/>
</dbReference>
<dbReference type="GO" id="GO:0006412">
    <property type="term" value="P:translation"/>
    <property type="evidence" value="ECO:0007669"/>
    <property type="project" value="UniProtKB-KW"/>
</dbReference>
<dbReference type="CDD" id="cd24093">
    <property type="entry name" value="ASKHA_NBD_HSP70_Ssb"/>
    <property type="match status" value="1"/>
</dbReference>
<dbReference type="FunFam" id="3.90.640.10:FF:000002">
    <property type="entry name" value="Heat shock 70 kDa"/>
    <property type="match status" value="1"/>
</dbReference>
<dbReference type="FunFam" id="3.30.420.40:FF:000172">
    <property type="entry name" value="Heat shock 70 kDa protein"/>
    <property type="match status" value="1"/>
</dbReference>
<dbReference type="FunFam" id="1.20.1270.10:FF:000014">
    <property type="entry name" value="Heat shock protein 70"/>
    <property type="match status" value="1"/>
</dbReference>
<dbReference type="FunFam" id="3.30.420.40:FF:000026">
    <property type="entry name" value="Heat shock protein 70"/>
    <property type="match status" value="1"/>
</dbReference>
<dbReference type="FunFam" id="2.60.34.10:FF:000004">
    <property type="entry name" value="Heat shock protein SSB1"/>
    <property type="match status" value="1"/>
</dbReference>
<dbReference type="FunFam" id="3.30.30.30:FF:000005">
    <property type="entry name" value="Heat shock protein ssb1"/>
    <property type="match status" value="1"/>
</dbReference>
<dbReference type="Gene3D" id="1.20.1270.10">
    <property type="match status" value="1"/>
</dbReference>
<dbReference type="Gene3D" id="3.30.30.30">
    <property type="match status" value="1"/>
</dbReference>
<dbReference type="Gene3D" id="3.30.420.40">
    <property type="match status" value="2"/>
</dbReference>
<dbReference type="Gene3D" id="3.90.640.10">
    <property type="entry name" value="Actin, Chain A, domain 4"/>
    <property type="match status" value="1"/>
</dbReference>
<dbReference type="Gene3D" id="2.60.34.10">
    <property type="entry name" value="Substrate Binding Domain Of DNAk, Chain A, domain 1"/>
    <property type="match status" value="1"/>
</dbReference>
<dbReference type="InterPro" id="IPR043129">
    <property type="entry name" value="ATPase_NBD"/>
</dbReference>
<dbReference type="InterPro" id="IPR018181">
    <property type="entry name" value="Heat_shock_70_CS"/>
</dbReference>
<dbReference type="InterPro" id="IPR029048">
    <property type="entry name" value="HSP70_C_sf"/>
</dbReference>
<dbReference type="InterPro" id="IPR029047">
    <property type="entry name" value="HSP70_peptide-bd_sf"/>
</dbReference>
<dbReference type="InterPro" id="IPR013126">
    <property type="entry name" value="Hsp_70_fam"/>
</dbReference>
<dbReference type="NCBIfam" id="NF001413">
    <property type="entry name" value="PRK00290.1"/>
    <property type="match status" value="1"/>
</dbReference>
<dbReference type="PANTHER" id="PTHR19375">
    <property type="entry name" value="HEAT SHOCK PROTEIN 70KDA"/>
    <property type="match status" value="1"/>
</dbReference>
<dbReference type="Pfam" id="PF00012">
    <property type="entry name" value="HSP70"/>
    <property type="match status" value="1"/>
</dbReference>
<dbReference type="PRINTS" id="PR00301">
    <property type="entry name" value="HEATSHOCK70"/>
</dbReference>
<dbReference type="SUPFAM" id="SSF53067">
    <property type="entry name" value="Actin-like ATPase domain"/>
    <property type="match status" value="2"/>
</dbReference>
<dbReference type="SUPFAM" id="SSF100934">
    <property type="entry name" value="Heat shock protein 70kD (HSP70), C-terminal subdomain"/>
    <property type="match status" value="1"/>
</dbReference>
<dbReference type="SUPFAM" id="SSF100920">
    <property type="entry name" value="Heat shock protein 70kD (HSP70), peptide-binding domain"/>
    <property type="match status" value="1"/>
</dbReference>
<dbReference type="PROSITE" id="PS00297">
    <property type="entry name" value="HSP70_1"/>
    <property type="match status" value="1"/>
</dbReference>
<dbReference type="PROSITE" id="PS00329">
    <property type="entry name" value="HSP70_2"/>
    <property type="match status" value="1"/>
</dbReference>
<dbReference type="PROSITE" id="PS01036">
    <property type="entry name" value="HSP70_3"/>
    <property type="match status" value="1"/>
</dbReference>
<reference key="1">
    <citation type="journal article" date="2004" name="Science">
        <title>The Ashbya gossypii genome as a tool for mapping the ancient Saccharomyces cerevisiae genome.</title>
        <authorList>
            <person name="Dietrich F.S."/>
            <person name="Voegeli S."/>
            <person name="Brachat S."/>
            <person name="Lerch A."/>
            <person name="Gates K."/>
            <person name="Steiner S."/>
            <person name="Mohr C."/>
            <person name="Poehlmann R."/>
            <person name="Luedi P."/>
            <person name="Choi S."/>
            <person name="Wing R.A."/>
            <person name="Flavier A."/>
            <person name="Gaffney T.D."/>
            <person name="Philippsen P."/>
        </authorList>
    </citation>
    <scope>NUCLEOTIDE SEQUENCE [LARGE SCALE GENOMIC DNA]</scope>
    <source>
        <strain>ATCC 10895 / CBS 109.51 / FGSC 9923 / NRRL Y-1056</strain>
    </source>
</reference>
<reference key="2">
    <citation type="journal article" date="2013" name="G3 (Bethesda)">
        <title>Genomes of Ashbya fungi isolated from insects reveal four mating-type loci, numerous translocations, lack of transposons, and distinct gene duplications.</title>
        <authorList>
            <person name="Dietrich F.S."/>
            <person name="Voegeli S."/>
            <person name="Kuo S."/>
            <person name="Philippsen P."/>
        </authorList>
    </citation>
    <scope>GENOME REANNOTATION</scope>
    <source>
        <strain>ATCC 10895 / CBS 109.51 / FGSC 9923 / NRRL Y-1056</strain>
    </source>
</reference>
<protein>
    <recommendedName>
        <fullName>Ribosome-associated molecular chaperone SSB1</fullName>
        <ecNumber>3.6.4.10</ecNumber>
    </recommendedName>
    <alternativeName>
        <fullName>Heat shock protein SSB1</fullName>
    </alternativeName>
    <alternativeName>
        <fullName>Hsp70 chaperone Ssb</fullName>
    </alternativeName>
</protein>
<accession>Q75E44</accession>
<keyword id="KW-0067">ATP-binding</keyword>
<keyword id="KW-0143">Chaperone</keyword>
<keyword id="KW-0963">Cytoplasm</keyword>
<keyword id="KW-0378">Hydrolase</keyword>
<keyword id="KW-0547">Nucleotide-binding</keyword>
<keyword id="KW-0648">Protein biosynthesis</keyword>
<keyword id="KW-1185">Reference proteome</keyword>
<proteinExistence type="inferred from homology"/>
<feature type="chain" id="PRO_0000078361" description="Ribosome-associated molecular chaperone SSB1">
    <location>
        <begin position="1"/>
        <end position="613"/>
    </location>
</feature>
<feature type="region of interest" description="Nucleotide binding domain (NBD)" evidence="1">
    <location>
        <begin position="1"/>
        <end position="391"/>
    </location>
</feature>
<feature type="region of interest" description="Inter-domain linker" evidence="1">
    <location>
        <begin position="392"/>
        <end position="402"/>
    </location>
</feature>
<feature type="region of interest" description="Substrate binding domain (SBD)" evidence="1">
    <location>
        <begin position="403"/>
        <end position="613"/>
    </location>
</feature>
<feature type="region of interest" description="Lid domain (SBDalpha)" evidence="1">
    <location>
        <begin position="516"/>
        <end position="612"/>
    </location>
</feature>
<feature type="short sequence motif" description="Nuclear export signal" evidence="2">
    <location>
        <begin position="574"/>
        <end position="582"/>
    </location>
</feature>
<feature type="binding site" evidence="1">
    <location>
        <begin position="16"/>
        <end position="18"/>
    </location>
    <ligand>
        <name>ATP</name>
        <dbReference type="ChEBI" id="CHEBI:30616"/>
    </ligand>
</feature>
<feature type="binding site" evidence="1">
    <location>
        <position position="73"/>
    </location>
    <ligand>
        <name>ATP</name>
        <dbReference type="ChEBI" id="CHEBI:30616"/>
    </ligand>
</feature>
<feature type="binding site" evidence="1">
    <location>
        <begin position="205"/>
        <end position="207"/>
    </location>
    <ligand>
        <name>ATP</name>
        <dbReference type="ChEBI" id="CHEBI:30616"/>
    </ligand>
</feature>
<feature type="binding site" evidence="1">
    <location>
        <begin position="271"/>
        <end position="278"/>
    </location>
    <ligand>
        <name>ATP</name>
        <dbReference type="ChEBI" id="CHEBI:30616"/>
    </ligand>
</feature>
<feature type="binding site" evidence="1">
    <location>
        <position position="342"/>
    </location>
    <ligand>
        <name>ATP</name>
        <dbReference type="ChEBI" id="CHEBI:30616"/>
    </ligand>
</feature>
<comment type="function">
    <text evidence="2">Ribosome-bound, Hsp70-type chaperone that assists in the cotranslational folding of newly synthesized proteins in the cytosol. Stimulates folding by interacting with nascent chains, binding to short, largely hydrophobic sequences exposed by unfolded proteins, thereby stabilizing longer, more slowly translated, and aggregation-prone nascent polypeptides and domains that cannot fold stably until fully synthesized. The Hsp70-protein substrate interaction depends on ATP-binding and on allosteric regulation between the NBD and the SBD. The ATP-bound state is characterized by a fast exchange rate of substrate (low affinity state), while in the ADP-bound state exchange is much slower (high affinity state). During the Hsp70 cycle, the chaperone switches between the ATP-bound state (open conformation) and the ADP-bound state (closed conformation) by major conformational rearrangements involving mainly the lid domain. Ssb cooperates with a specific Hsp40/Hsp70 co-chaperone termed the ribosome-associated complex (RAC), which stimulates the ATPase activity of the ribosome-associated pool of Ssbs and switches it to the high affinity substrate binding state. Hsp110 chaperone SSE1 and FES1 act as nucleotide exchange factors that cause substrate release.</text>
</comment>
<comment type="catalytic activity">
    <reaction evidence="2">
        <text>ATP + H2O = ADP + phosphate + H(+)</text>
        <dbReference type="Rhea" id="RHEA:13065"/>
        <dbReference type="ChEBI" id="CHEBI:15377"/>
        <dbReference type="ChEBI" id="CHEBI:15378"/>
        <dbReference type="ChEBI" id="CHEBI:30616"/>
        <dbReference type="ChEBI" id="CHEBI:43474"/>
        <dbReference type="ChEBI" id="CHEBI:456216"/>
        <dbReference type="EC" id="3.6.4.10"/>
    </reaction>
</comment>
<comment type="subunit">
    <text evidence="2">Binds to ribosomes. Binds close to the ribosomal tunnel exit via contacts with both ribosomal proteins and rRNA. Directly interacts with nascent polypeptides. This interaction is dependent on the ribosome-associated complex (RAC). Interacts with SSE1. Interacts with FES1.</text>
</comment>
<comment type="subcellular location">
    <subcellularLocation>
        <location evidence="2">Cytoplasm</location>
    </subcellularLocation>
    <text evidence="2">Associated with translating ribosomes.</text>
</comment>
<comment type="similarity">
    <text evidence="3">Belongs to the heat shock protein 70 family. Ssb-type Hsp70 subfamily.</text>
</comment>
<sequence length="613" mass="66253">MAEGVFSGAIGIDLGTTYSCVATYESSVEIIANEQGNRVTPSFVAFTPEERLIGDAAKNQAALNPRNTVFDAKRLIGRRFDDESVQSDMKTWPFKVIDANGSPMIEVEYLGETKSFSPQEISAMVLTKMKEIAEAKIGKKVEKAVITVPAYFNDAQRQATKDAGAIAGLNVLRIINEPTAAAIAYGLGAGKSEKERHVLIFDLGGGTFDVSLLNIAGGVYTVKSTSGNTHLGGQDFDTNLLEHFKAEFKKKTGLDISGDARALRRLRTAAERAKRTLSSVTQTTVEVDSLFEGEDFETSITRARFEDINAALFKSTLEPVEQVLKDAQISKSQIDEVVLVGGSTRIPKVQKLLSDFFEGKQLEKSINPDEAVAYGAAVQAAILTGSNLSDDTKDLLLLDVAPLSLGVAMQGDVFACVIPRNTTVPTIKRRTFTTVHDGQTTVTFPVYQGERVNCKDNTLLGEFDLKGIPPLPAGEPVLEAIFEVDANGILKVTAVEKSTGKTANITISNAIGRLSSEDIEKMVSQAEEFKAADEAFAKRHEARQRLESYVSSIEQTVSDPVLSAKMKKGAKSKVEAALADAFSALQIEESSAEDYRKAEIGLKRVVTKAMATR</sequence>
<evidence type="ECO:0000250" key="1">
    <source>
        <dbReference type="UniProtKB" id="G0SCU5"/>
    </source>
</evidence>
<evidence type="ECO:0000250" key="2">
    <source>
        <dbReference type="UniProtKB" id="P11484"/>
    </source>
</evidence>
<evidence type="ECO:0000305" key="3"/>
<name>SSB1_EREGS</name>
<gene>
    <name type="primary">SSB1</name>
    <name type="ordered locus">ABL174C</name>
</gene>